<organism>
    <name type="scientific">Homo sapiens</name>
    <name type="common">Human</name>
    <dbReference type="NCBI Taxonomy" id="9606"/>
    <lineage>
        <taxon>Eukaryota</taxon>
        <taxon>Metazoa</taxon>
        <taxon>Chordata</taxon>
        <taxon>Craniata</taxon>
        <taxon>Vertebrata</taxon>
        <taxon>Euteleostomi</taxon>
        <taxon>Mammalia</taxon>
        <taxon>Eutheria</taxon>
        <taxon>Euarchontoglires</taxon>
        <taxon>Primates</taxon>
        <taxon>Haplorrhini</taxon>
        <taxon>Catarrhini</taxon>
        <taxon>Hominidae</taxon>
        <taxon>Homo</taxon>
    </lineage>
</organism>
<dbReference type="EC" id="3.1.3.48"/>
<dbReference type="EMBL" id="AK090923">
    <property type="protein sequence ID" value="BAC03548.1"/>
    <property type="molecule type" value="mRNA"/>
</dbReference>
<dbReference type="EMBL" id="AK127312">
    <property type="protein sequence ID" value="BAG54479.1"/>
    <property type="molecule type" value="mRNA"/>
</dbReference>
<dbReference type="EMBL" id="AK295604">
    <property type="protein sequence ID" value="BAH12122.1"/>
    <property type="molecule type" value="mRNA"/>
</dbReference>
<dbReference type="EMBL" id="AK316270">
    <property type="protein sequence ID" value="BAH14641.1"/>
    <property type="molecule type" value="mRNA"/>
</dbReference>
<dbReference type="EMBL" id="AL832541">
    <property type="protein sequence ID" value="CAD38632.2"/>
    <property type="molecule type" value="mRNA"/>
</dbReference>
<dbReference type="EMBL" id="AC103974">
    <property type="status" value="NOT_ANNOTATED_CDS"/>
    <property type="molecule type" value="Genomic_DNA"/>
</dbReference>
<dbReference type="EMBL" id="CH471064">
    <property type="protein sequence ID" value="EAW68363.1"/>
    <property type="molecule type" value="Genomic_DNA"/>
</dbReference>
<dbReference type="EMBL" id="CH471064">
    <property type="protein sequence ID" value="EAW68365.1"/>
    <property type="molecule type" value="Genomic_DNA"/>
</dbReference>
<dbReference type="EMBL" id="CH471064">
    <property type="protein sequence ID" value="EAW68367.1"/>
    <property type="molecule type" value="Genomic_DNA"/>
</dbReference>
<dbReference type="EMBL" id="BC064807">
    <property type="protein sequence ID" value="AAH64807.1"/>
    <property type="molecule type" value="mRNA"/>
</dbReference>
<dbReference type="EMBL" id="U27831">
    <property type="protein sequence ID" value="AAA87555.1"/>
    <property type="molecule type" value="mRNA"/>
</dbReference>
<dbReference type="CCDS" id="CCDS41626.1">
    <molecule id="P54829-2"/>
</dbReference>
<dbReference type="CCDS" id="CCDS60746.1">
    <molecule id="P54829-3"/>
</dbReference>
<dbReference type="CCDS" id="CCDS7845.1">
    <molecule id="P54829-1"/>
</dbReference>
<dbReference type="RefSeq" id="NP_001035059.1">
    <molecule id="P54829-2"/>
    <property type="nucleotide sequence ID" value="NM_001039970.2"/>
</dbReference>
<dbReference type="RefSeq" id="NP_001265165.1">
    <molecule id="P54829-2"/>
    <property type="nucleotide sequence ID" value="NM_001278236.1"/>
</dbReference>
<dbReference type="RefSeq" id="NP_001265167.1">
    <molecule id="P54829-3"/>
    <property type="nucleotide sequence ID" value="NM_001278238.2"/>
</dbReference>
<dbReference type="RefSeq" id="NP_001265168.1">
    <property type="nucleotide sequence ID" value="NM_001278239.1"/>
</dbReference>
<dbReference type="RefSeq" id="NP_008837.1">
    <molecule id="P54829-1"/>
    <property type="nucleotide sequence ID" value="NM_006906.2"/>
</dbReference>
<dbReference type="RefSeq" id="NP_116170.3">
    <molecule id="P54829-1"/>
    <property type="nucleotide sequence ID" value="NM_032781.3"/>
</dbReference>
<dbReference type="PDB" id="2BIJ">
    <property type="method" value="X-ray"/>
    <property type="resolution" value="2.05 A"/>
    <property type="chains" value="A=282-563"/>
</dbReference>
<dbReference type="PDB" id="2BV5">
    <property type="method" value="X-ray"/>
    <property type="resolution" value="1.80 A"/>
    <property type="chains" value="A=280-561"/>
</dbReference>
<dbReference type="PDB" id="2CJZ">
    <property type="method" value="X-ray"/>
    <property type="resolution" value="1.70 A"/>
    <property type="chains" value="A=282-563"/>
</dbReference>
<dbReference type="PDB" id="5OVR">
    <property type="method" value="X-ray"/>
    <property type="resolution" value="2.15 A"/>
    <property type="chains" value="A=282-561"/>
</dbReference>
<dbReference type="PDB" id="5OVX">
    <property type="method" value="X-ray"/>
    <property type="resolution" value="2.10 A"/>
    <property type="chains" value="A=282-563"/>
</dbReference>
<dbReference type="PDB" id="5OW1">
    <property type="method" value="X-ray"/>
    <property type="resolution" value="2.05 A"/>
    <property type="chains" value="A=282-563"/>
</dbReference>
<dbReference type="PDB" id="6H8R">
    <property type="method" value="X-ray"/>
    <property type="resolution" value="1.66 A"/>
    <property type="chains" value="A=282-563"/>
</dbReference>
<dbReference type="PDB" id="8SLS">
    <property type="method" value="X-ray"/>
    <property type="resolution" value="1.71 A"/>
    <property type="chains" value="A=280-561"/>
</dbReference>
<dbReference type="PDB" id="8SLT">
    <property type="method" value="X-ray"/>
    <property type="resolution" value="1.96 A"/>
    <property type="chains" value="A=280-561"/>
</dbReference>
<dbReference type="PDB" id="8SLU">
    <property type="method" value="X-ray"/>
    <property type="resolution" value="1.84 A"/>
    <property type="chains" value="A=280-561"/>
</dbReference>
<dbReference type="PDB" id="9EEX">
    <property type="method" value="X-ray"/>
    <property type="resolution" value="1.27 A"/>
    <property type="chains" value="A=282-563"/>
</dbReference>
<dbReference type="PDB" id="9EEY">
    <property type="method" value="X-ray"/>
    <property type="resolution" value="1.75 A"/>
    <property type="chains" value="A=282-563"/>
</dbReference>
<dbReference type="PDB" id="9EEZ">
    <property type="method" value="X-ray"/>
    <property type="resolution" value="1.60 A"/>
    <property type="chains" value="A=282-563"/>
</dbReference>
<dbReference type="PDBsum" id="2BIJ"/>
<dbReference type="PDBsum" id="2BV5"/>
<dbReference type="PDBsum" id="2CJZ"/>
<dbReference type="PDBsum" id="5OVR"/>
<dbReference type="PDBsum" id="5OVX"/>
<dbReference type="PDBsum" id="5OW1"/>
<dbReference type="PDBsum" id="6H8R"/>
<dbReference type="PDBsum" id="8SLS"/>
<dbReference type="PDBsum" id="8SLT"/>
<dbReference type="PDBsum" id="8SLU"/>
<dbReference type="PDBsum" id="9EEX"/>
<dbReference type="PDBsum" id="9EEY"/>
<dbReference type="PDBsum" id="9EEZ"/>
<dbReference type="SMR" id="P54829"/>
<dbReference type="BioGRID" id="124312">
    <property type="interactions" value="80"/>
</dbReference>
<dbReference type="ELM" id="P54829"/>
<dbReference type="FunCoup" id="P54829">
    <property type="interactions" value="717"/>
</dbReference>
<dbReference type="IntAct" id="P54829">
    <property type="interactions" value="51"/>
</dbReference>
<dbReference type="MINT" id="P54829"/>
<dbReference type="STRING" id="9606.ENSP00000351342"/>
<dbReference type="BindingDB" id="P54829"/>
<dbReference type="ChEMBL" id="CHEMBL2007628"/>
<dbReference type="DEPOD" id="PTPN5"/>
<dbReference type="iPTMnet" id="P54829"/>
<dbReference type="PhosphoSitePlus" id="P54829"/>
<dbReference type="BioMuta" id="PTPN5"/>
<dbReference type="DMDM" id="317373540"/>
<dbReference type="jPOST" id="P54829"/>
<dbReference type="MassIVE" id="P54829"/>
<dbReference type="PaxDb" id="9606-ENSP00000351342"/>
<dbReference type="PeptideAtlas" id="P54829"/>
<dbReference type="ProteomicsDB" id="56735">
    <molecule id="P54829-1"/>
</dbReference>
<dbReference type="ProteomicsDB" id="56736">
    <molecule id="P54829-2"/>
</dbReference>
<dbReference type="ProteomicsDB" id="7064"/>
<dbReference type="Antibodypedia" id="25176">
    <property type="antibodies" value="295 antibodies from 30 providers"/>
</dbReference>
<dbReference type="DNASU" id="84867"/>
<dbReference type="Ensembl" id="ENST00000358540.7">
    <molecule id="P54829-1"/>
    <property type="protein sequence ID" value="ENSP00000351342.2"/>
    <property type="gene ID" value="ENSG00000110786.18"/>
</dbReference>
<dbReference type="Ensembl" id="ENST00000396168.1">
    <molecule id="P54829-3"/>
    <property type="protein sequence ID" value="ENSP00000379471.1"/>
    <property type="gene ID" value="ENSG00000110786.18"/>
</dbReference>
<dbReference type="Ensembl" id="ENST00000396170.5">
    <molecule id="P54829-2"/>
    <property type="protein sequence ID" value="ENSP00000379473.1"/>
    <property type="gene ID" value="ENSG00000110786.18"/>
</dbReference>
<dbReference type="GeneID" id="84867"/>
<dbReference type="KEGG" id="hsa:84867"/>
<dbReference type="MANE-Select" id="ENST00000358540.7">
    <property type="protein sequence ID" value="ENSP00000351342.2"/>
    <property type="RefSeq nucleotide sequence ID" value="NM_006906.2"/>
    <property type="RefSeq protein sequence ID" value="NP_008837.1"/>
</dbReference>
<dbReference type="UCSC" id="uc001mpd.5">
    <molecule id="P54829-1"/>
    <property type="organism name" value="human"/>
</dbReference>
<dbReference type="AGR" id="HGNC:9657"/>
<dbReference type="CTD" id="84867"/>
<dbReference type="DisGeNET" id="84867"/>
<dbReference type="GeneCards" id="PTPN5"/>
<dbReference type="HGNC" id="HGNC:9657">
    <property type="gene designation" value="PTPN5"/>
</dbReference>
<dbReference type="HPA" id="ENSG00000110786">
    <property type="expression patterns" value="Tissue enriched (brain)"/>
</dbReference>
<dbReference type="MIM" id="176879">
    <property type="type" value="gene"/>
</dbReference>
<dbReference type="neXtProt" id="NX_P54829"/>
<dbReference type="OpenTargets" id="ENSG00000110786"/>
<dbReference type="PharmGKB" id="PA34001"/>
<dbReference type="VEuPathDB" id="HostDB:ENSG00000110786"/>
<dbReference type="eggNOG" id="KOG0789">
    <property type="taxonomic scope" value="Eukaryota"/>
</dbReference>
<dbReference type="GeneTree" id="ENSGT00940000159916"/>
<dbReference type="HOGENOM" id="CLU_001645_10_2_1"/>
<dbReference type="InParanoid" id="P54829"/>
<dbReference type="OMA" id="TKQHNWI"/>
<dbReference type="OrthoDB" id="9993594at2759"/>
<dbReference type="PAN-GO" id="P54829">
    <property type="GO annotations" value="7 GO annotations based on evolutionary models"/>
</dbReference>
<dbReference type="PhylomeDB" id="P54829"/>
<dbReference type="TreeFam" id="TF331016"/>
<dbReference type="BRENDA" id="3.1.3.48">
    <property type="organism ID" value="2681"/>
</dbReference>
<dbReference type="PathwayCommons" id="P54829"/>
<dbReference type="Reactome" id="R-HSA-9008059">
    <property type="pathway name" value="Interleukin-37 signaling"/>
</dbReference>
<dbReference type="SignaLink" id="P54829"/>
<dbReference type="SIGNOR" id="P54829"/>
<dbReference type="BioGRID-ORCS" id="84867">
    <property type="hits" value="12 hits in 1161 CRISPR screens"/>
</dbReference>
<dbReference type="EvolutionaryTrace" id="P54829"/>
<dbReference type="GeneWiki" id="PTPN5"/>
<dbReference type="GenomeRNAi" id="84867"/>
<dbReference type="Pharos" id="P54829">
    <property type="development level" value="Tchem"/>
</dbReference>
<dbReference type="PRO" id="PR:P54829"/>
<dbReference type="Proteomes" id="UP000005640">
    <property type="component" value="Chromosome 11"/>
</dbReference>
<dbReference type="RNAct" id="P54829">
    <property type="molecule type" value="protein"/>
</dbReference>
<dbReference type="Bgee" id="ENSG00000110786">
    <property type="expression patterns" value="Expressed in endothelial cell and 114 other cell types or tissues"/>
</dbReference>
<dbReference type="ExpressionAtlas" id="P54829">
    <property type="expression patterns" value="baseline and differential"/>
</dbReference>
<dbReference type="GO" id="GO:0030054">
    <property type="term" value="C:cell junction"/>
    <property type="evidence" value="ECO:0000318"/>
    <property type="project" value="GO_Central"/>
</dbReference>
<dbReference type="GO" id="GO:0005829">
    <property type="term" value="C:cytosol"/>
    <property type="evidence" value="ECO:0000318"/>
    <property type="project" value="GO_Central"/>
</dbReference>
<dbReference type="GO" id="GO:0005789">
    <property type="term" value="C:endoplasmic reticulum membrane"/>
    <property type="evidence" value="ECO:0007669"/>
    <property type="project" value="UniProtKB-SubCell"/>
</dbReference>
<dbReference type="GO" id="GO:0016020">
    <property type="term" value="C:membrane"/>
    <property type="evidence" value="ECO:0000304"/>
    <property type="project" value="UniProtKB"/>
</dbReference>
<dbReference type="GO" id="GO:0005654">
    <property type="term" value="C:nucleoplasm"/>
    <property type="evidence" value="ECO:0000304"/>
    <property type="project" value="Reactome"/>
</dbReference>
<dbReference type="GO" id="GO:0005886">
    <property type="term" value="C:plasma membrane"/>
    <property type="evidence" value="ECO:0000318"/>
    <property type="project" value="GO_Central"/>
</dbReference>
<dbReference type="GO" id="GO:0001784">
    <property type="term" value="F:phosphotyrosine residue binding"/>
    <property type="evidence" value="ECO:0000314"/>
    <property type="project" value="UniProtKB"/>
</dbReference>
<dbReference type="GO" id="GO:0019901">
    <property type="term" value="F:protein kinase binding"/>
    <property type="evidence" value="ECO:0000318"/>
    <property type="project" value="GO_Central"/>
</dbReference>
<dbReference type="GO" id="GO:0004725">
    <property type="term" value="F:protein tyrosine phosphatase activity"/>
    <property type="evidence" value="ECO:0000318"/>
    <property type="project" value="GO_Central"/>
</dbReference>
<dbReference type="GO" id="GO:0006470">
    <property type="term" value="P:protein dephosphorylation"/>
    <property type="evidence" value="ECO:0000304"/>
    <property type="project" value="UniProtKB"/>
</dbReference>
<dbReference type="GO" id="GO:0007165">
    <property type="term" value="P:signal transduction"/>
    <property type="evidence" value="ECO:0000318"/>
    <property type="project" value="GO_Central"/>
</dbReference>
<dbReference type="CDD" id="cd14613">
    <property type="entry name" value="PTPc-N5"/>
    <property type="match status" value="1"/>
</dbReference>
<dbReference type="FunFam" id="3.90.190.10:FF:000020">
    <property type="entry name" value="Tyrosine-protein phosphatase non-receptor type 5"/>
    <property type="match status" value="1"/>
</dbReference>
<dbReference type="Gene3D" id="3.90.190.10">
    <property type="entry name" value="Protein tyrosine phosphatase superfamily"/>
    <property type="match status" value="1"/>
</dbReference>
<dbReference type="InterPro" id="IPR029021">
    <property type="entry name" value="Prot-tyrosine_phosphatase-like"/>
</dbReference>
<dbReference type="InterPro" id="IPR000242">
    <property type="entry name" value="PTP_cat"/>
</dbReference>
<dbReference type="InterPro" id="IPR016130">
    <property type="entry name" value="Tyr_Pase_AS"/>
</dbReference>
<dbReference type="InterPro" id="IPR003595">
    <property type="entry name" value="Tyr_Pase_cat"/>
</dbReference>
<dbReference type="InterPro" id="IPR000387">
    <property type="entry name" value="Tyr_Pase_dom"/>
</dbReference>
<dbReference type="InterPro" id="IPR008356">
    <property type="entry name" value="Tyr_Pase_KIM-con"/>
</dbReference>
<dbReference type="InterPro" id="IPR016334">
    <property type="entry name" value="Tyr_Pase_rcpt_R/non-rcpt_5"/>
</dbReference>
<dbReference type="PANTHER" id="PTHR46198">
    <property type="entry name" value="PROTEIN-TYROSINE-PHOSPHATASE"/>
    <property type="match status" value="1"/>
</dbReference>
<dbReference type="PANTHER" id="PTHR46198:SF1">
    <property type="entry name" value="TYROSINE-PROTEIN PHOSPHATASE NON-RECEPTOR TYPE 5"/>
    <property type="match status" value="1"/>
</dbReference>
<dbReference type="Pfam" id="PF00102">
    <property type="entry name" value="Y_phosphatase"/>
    <property type="match status" value="1"/>
</dbReference>
<dbReference type="PIRSF" id="PIRSF001997">
    <property type="entry name" value="PTPRR"/>
    <property type="match status" value="1"/>
</dbReference>
<dbReference type="PRINTS" id="PR01778">
    <property type="entry name" value="KIMPTPASE"/>
</dbReference>
<dbReference type="PRINTS" id="PR00700">
    <property type="entry name" value="PRTYPHPHTASE"/>
</dbReference>
<dbReference type="SMART" id="SM00194">
    <property type="entry name" value="PTPc"/>
    <property type="match status" value="1"/>
</dbReference>
<dbReference type="SMART" id="SM00404">
    <property type="entry name" value="PTPc_motif"/>
    <property type="match status" value="1"/>
</dbReference>
<dbReference type="SUPFAM" id="SSF52799">
    <property type="entry name" value="(Phosphotyrosine protein) phosphatases II"/>
    <property type="match status" value="1"/>
</dbReference>
<dbReference type="PROSITE" id="PS00383">
    <property type="entry name" value="TYR_PHOSPHATASE_1"/>
    <property type="match status" value="1"/>
</dbReference>
<dbReference type="PROSITE" id="PS50056">
    <property type="entry name" value="TYR_PHOSPHATASE_2"/>
    <property type="match status" value="1"/>
</dbReference>
<dbReference type="PROSITE" id="PS50055">
    <property type="entry name" value="TYR_PHOSPHATASE_PTP"/>
    <property type="match status" value="1"/>
</dbReference>
<proteinExistence type="evidence at protein level"/>
<gene>
    <name type="primary">PTPN5</name>
</gene>
<protein>
    <recommendedName>
        <fullName>Tyrosine-protein phosphatase non-receptor type 5</fullName>
        <ecNumber>3.1.3.48</ecNumber>
    </recommendedName>
    <alternativeName>
        <fullName>Neural-specific protein-tyrosine phosphatase</fullName>
    </alternativeName>
    <alternativeName>
        <fullName>Striatum-enriched protein-tyrosine phosphatase</fullName>
        <shortName>STEP</shortName>
    </alternativeName>
</protein>
<reference key="1">
    <citation type="journal article" date="2004" name="Nat. Genet.">
        <title>Complete sequencing and characterization of 21,243 full-length human cDNAs.</title>
        <authorList>
            <person name="Ota T."/>
            <person name="Suzuki Y."/>
            <person name="Nishikawa T."/>
            <person name="Otsuki T."/>
            <person name="Sugiyama T."/>
            <person name="Irie R."/>
            <person name="Wakamatsu A."/>
            <person name="Hayashi K."/>
            <person name="Sato H."/>
            <person name="Nagai K."/>
            <person name="Kimura K."/>
            <person name="Makita H."/>
            <person name="Sekine M."/>
            <person name="Obayashi M."/>
            <person name="Nishi T."/>
            <person name="Shibahara T."/>
            <person name="Tanaka T."/>
            <person name="Ishii S."/>
            <person name="Yamamoto J."/>
            <person name="Saito K."/>
            <person name="Kawai Y."/>
            <person name="Isono Y."/>
            <person name="Nakamura Y."/>
            <person name="Nagahari K."/>
            <person name="Murakami K."/>
            <person name="Yasuda T."/>
            <person name="Iwayanagi T."/>
            <person name="Wagatsuma M."/>
            <person name="Shiratori A."/>
            <person name="Sudo H."/>
            <person name="Hosoiri T."/>
            <person name="Kaku Y."/>
            <person name="Kodaira H."/>
            <person name="Kondo H."/>
            <person name="Sugawara M."/>
            <person name="Takahashi M."/>
            <person name="Kanda K."/>
            <person name="Yokoi T."/>
            <person name="Furuya T."/>
            <person name="Kikkawa E."/>
            <person name="Omura Y."/>
            <person name="Abe K."/>
            <person name="Kamihara K."/>
            <person name="Katsuta N."/>
            <person name="Sato K."/>
            <person name="Tanikawa M."/>
            <person name="Yamazaki M."/>
            <person name="Ninomiya K."/>
            <person name="Ishibashi T."/>
            <person name="Yamashita H."/>
            <person name="Murakawa K."/>
            <person name="Fujimori K."/>
            <person name="Tanai H."/>
            <person name="Kimata M."/>
            <person name="Watanabe M."/>
            <person name="Hiraoka S."/>
            <person name="Chiba Y."/>
            <person name="Ishida S."/>
            <person name="Ono Y."/>
            <person name="Takiguchi S."/>
            <person name="Watanabe S."/>
            <person name="Yosida M."/>
            <person name="Hotuta T."/>
            <person name="Kusano J."/>
            <person name="Kanehori K."/>
            <person name="Takahashi-Fujii A."/>
            <person name="Hara H."/>
            <person name="Tanase T.-O."/>
            <person name="Nomura Y."/>
            <person name="Togiya S."/>
            <person name="Komai F."/>
            <person name="Hara R."/>
            <person name="Takeuchi K."/>
            <person name="Arita M."/>
            <person name="Imose N."/>
            <person name="Musashino K."/>
            <person name="Yuuki H."/>
            <person name="Oshima A."/>
            <person name="Sasaki N."/>
            <person name="Aotsuka S."/>
            <person name="Yoshikawa Y."/>
            <person name="Matsunawa H."/>
            <person name="Ichihara T."/>
            <person name="Shiohata N."/>
            <person name="Sano S."/>
            <person name="Moriya S."/>
            <person name="Momiyama H."/>
            <person name="Satoh N."/>
            <person name="Takami S."/>
            <person name="Terashima Y."/>
            <person name="Suzuki O."/>
            <person name="Nakagawa S."/>
            <person name="Senoh A."/>
            <person name="Mizoguchi H."/>
            <person name="Goto Y."/>
            <person name="Shimizu F."/>
            <person name="Wakebe H."/>
            <person name="Hishigaki H."/>
            <person name="Watanabe T."/>
            <person name="Sugiyama A."/>
            <person name="Takemoto M."/>
            <person name="Kawakami B."/>
            <person name="Yamazaki M."/>
            <person name="Watanabe K."/>
            <person name="Kumagai A."/>
            <person name="Itakura S."/>
            <person name="Fukuzumi Y."/>
            <person name="Fujimori Y."/>
            <person name="Komiyama M."/>
            <person name="Tashiro H."/>
            <person name="Tanigami A."/>
            <person name="Fujiwara T."/>
            <person name="Ono T."/>
            <person name="Yamada K."/>
            <person name="Fujii Y."/>
            <person name="Ozaki K."/>
            <person name="Hirao M."/>
            <person name="Ohmori Y."/>
            <person name="Kawabata A."/>
            <person name="Hikiji T."/>
            <person name="Kobatake N."/>
            <person name="Inagaki H."/>
            <person name="Ikema Y."/>
            <person name="Okamoto S."/>
            <person name="Okitani R."/>
            <person name="Kawakami T."/>
            <person name="Noguchi S."/>
            <person name="Itoh T."/>
            <person name="Shigeta K."/>
            <person name="Senba T."/>
            <person name="Matsumura K."/>
            <person name="Nakajima Y."/>
            <person name="Mizuno T."/>
            <person name="Morinaga M."/>
            <person name="Sasaki M."/>
            <person name="Togashi T."/>
            <person name="Oyama M."/>
            <person name="Hata H."/>
            <person name="Watanabe M."/>
            <person name="Komatsu T."/>
            <person name="Mizushima-Sugano J."/>
            <person name="Satoh T."/>
            <person name="Shirai Y."/>
            <person name="Takahashi Y."/>
            <person name="Nakagawa K."/>
            <person name="Okumura K."/>
            <person name="Nagase T."/>
            <person name="Nomura N."/>
            <person name="Kikuchi H."/>
            <person name="Masuho Y."/>
            <person name="Yamashita R."/>
            <person name="Nakai K."/>
            <person name="Yada T."/>
            <person name="Nakamura Y."/>
            <person name="Ohara O."/>
            <person name="Isogai T."/>
            <person name="Sugano S."/>
        </authorList>
    </citation>
    <scope>NUCLEOTIDE SEQUENCE [LARGE SCALE MRNA] (ISOFORMS 1; 2 AND 3)</scope>
    <scope>VARIANT ALA-170</scope>
    <source>
        <tissue>Amygdala</tissue>
        <tissue>Brain</tissue>
        <tissue>Hippocampus</tissue>
    </source>
</reference>
<reference key="2">
    <citation type="journal article" date="2007" name="BMC Genomics">
        <title>The full-ORF clone resource of the German cDNA consortium.</title>
        <authorList>
            <person name="Bechtel S."/>
            <person name="Rosenfelder H."/>
            <person name="Duda A."/>
            <person name="Schmidt C.P."/>
            <person name="Ernst U."/>
            <person name="Wellenreuther R."/>
            <person name="Mehrle A."/>
            <person name="Schuster C."/>
            <person name="Bahr A."/>
            <person name="Bloecker H."/>
            <person name="Heubner D."/>
            <person name="Hoerlein A."/>
            <person name="Michel G."/>
            <person name="Wedler H."/>
            <person name="Koehrer K."/>
            <person name="Ottenwaelder B."/>
            <person name="Poustka A."/>
            <person name="Wiemann S."/>
            <person name="Schupp I."/>
        </authorList>
    </citation>
    <scope>NUCLEOTIDE SEQUENCE [LARGE SCALE MRNA] (ISOFORM 1)</scope>
    <source>
        <tissue>Brain</tissue>
    </source>
</reference>
<reference key="3">
    <citation type="journal article" date="2006" name="Nature">
        <title>Human chromosome 11 DNA sequence and analysis including novel gene identification.</title>
        <authorList>
            <person name="Taylor T.D."/>
            <person name="Noguchi H."/>
            <person name="Totoki Y."/>
            <person name="Toyoda A."/>
            <person name="Kuroki Y."/>
            <person name="Dewar K."/>
            <person name="Lloyd C."/>
            <person name="Itoh T."/>
            <person name="Takeda T."/>
            <person name="Kim D.-W."/>
            <person name="She X."/>
            <person name="Barlow K.F."/>
            <person name="Bloom T."/>
            <person name="Bruford E."/>
            <person name="Chang J.L."/>
            <person name="Cuomo C.A."/>
            <person name="Eichler E."/>
            <person name="FitzGerald M.G."/>
            <person name="Jaffe D.B."/>
            <person name="LaButti K."/>
            <person name="Nicol R."/>
            <person name="Park H.-S."/>
            <person name="Seaman C."/>
            <person name="Sougnez C."/>
            <person name="Yang X."/>
            <person name="Zimmer A.R."/>
            <person name="Zody M.C."/>
            <person name="Birren B.W."/>
            <person name="Nusbaum C."/>
            <person name="Fujiyama A."/>
            <person name="Hattori M."/>
            <person name="Rogers J."/>
            <person name="Lander E.S."/>
            <person name="Sakaki Y."/>
        </authorList>
    </citation>
    <scope>NUCLEOTIDE SEQUENCE [LARGE SCALE GENOMIC DNA]</scope>
</reference>
<reference key="4">
    <citation type="submission" date="2005-09" db="EMBL/GenBank/DDBJ databases">
        <authorList>
            <person name="Mural R.J."/>
            <person name="Istrail S."/>
            <person name="Sutton G.G."/>
            <person name="Florea L."/>
            <person name="Halpern A.L."/>
            <person name="Mobarry C.M."/>
            <person name="Lippert R."/>
            <person name="Walenz B."/>
            <person name="Shatkay H."/>
            <person name="Dew I."/>
            <person name="Miller J.R."/>
            <person name="Flanigan M.J."/>
            <person name="Edwards N.J."/>
            <person name="Bolanos R."/>
            <person name="Fasulo D."/>
            <person name="Halldorsson B.V."/>
            <person name="Hannenhalli S."/>
            <person name="Turner R."/>
            <person name="Yooseph S."/>
            <person name="Lu F."/>
            <person name="Nusskern D.R."/>
            <person name="Shue B.C."/>
            <person name="Zheng X.H."/>
            <person name="Zhong F."/>
            <person name="Delcher A.L."/>
            <person name="Huson D.H."/>
            <person name="Kravitz S.A."/>
            <person name="Mouchard L."/>
            <person name="Reinert K."/>
            <person name="Remington K.A."/>
            <person name="Clark A.G."/>
            <person name="Waterman M.S."/>
            <person name="Eichler E.E."/>
            <person name="Adams M.D."/>
            <person name="Hunkapiller M.W."/>
            <person name="Myers E.W."/>
            <person name="Venter J.C."/>
        </authorList>
    </citation>
    <scope>NUCLEOTIDE SEQUENCE [LARGE SCALE GENOMIC DNA]</scope>
    <scope>VARIANT ALA-170</scope>
</reference>
<reference key="5">
    <citation type="journal article" date="2004" name="Genome Res.">
        <title>The status, quality, and expansion of the NIH full-length cDNA project: the Mammalian Gene Collection (MGC).</title>
        <authorList>
            <consortium name="The MGC Project Team"/>
        </authorList>
    </citation>
    <scope>NUCLEOTIDE SEQUENCE [LARGE SCALE MRNA] (ISOFORM 1)</scope>
    <source>
        <tissue>Brain</tissue>
    </source>
</reference>
<reference key="6">
    <citation type="journal article" date="1995" name="Genomics">
        <title>Molecular cloning of the human homolog of a striatum-enriched phosphatase (STEP) gene and chromosomal mapping of the human and murine loci.</title>
        <authorList>
            <person name="Li X."/>
            <person name="Luna J."/>
            <person name="Lombroso P.J."/>
            <person name="Francke U."/>
        </authorList>
    </citation>
    <scope>NUCLEOTIDE SEQUENCE [MRNA] OF 29-565 (ISOFORM 1)</scope>
    <source>
        <tissue>Brain</tissue>
    </source>
</reference>
<reference key="7">
    <citation type="journal article" date="2011" name="Biochem. J.">
        <title>Dephosphorylation of specific sites in the kinase-specificity sequence domain leads to ubiquitin-mediated degradation of the tyrosine phosphatase STEP.</title>
        <authorList>
            <person name="Mukherjee S."/>
            <person name="Poddar R."/>
            <person name="Deb I."/>
            <person name="Paul S."/>
        </authorList>
    </citation>
    <scope>PHOSPHORYLATION AT SER-245; THR-255 AND SER-268</scope>
    <scope>FUNCTION</scope>
</reference>
<reference key="8">
    <citation type="journal article" date="2006" name="Biochem. J.">
        <title>Crystal structures and inhibitor identification for PTPN5, PTPRR and PTPN7: a family of human MAPK-specific protein tyrosine phosphatases.</title>
        <authorList>
            <person name="Eswaran J."/>
            <person name="von Kries J.P."/>
            <person name="Marsden B."/>
            <person name="Longman E."/>
            <person name="Debreczeni J.E."/>
            <person name="Ugochukwu E."/>
            <person name="Turnbull A."/>
            <person name="Lee W.H."/>
            <person name="Knapp S."/>
            <person name="Barr A.J."/>
        </authorList>
    </citation>
    <scope>X-RAY CRYSTALLOGRAPHY (2.05 ANGSTROMS) OF 280-563 IN COMPLEX WITH SUBSTRATE ANALOG</scope>
</reference>
<feature type="chain" id="PRO_0000363657" description="Tyrosine-protein phosphatase non-receptor type 5">
    <location>
        <begin position="1"/>
        <end position="565"/>
    </location>
</feature>
<feature type="transmembrane region" description="Helical" evidence="2">
    <location>
        <begin position="88"/>
        <end position="108"/>
    </location>
</feature>
<feature type="transmembrane region" description="Helical" evidence="2">
    <location>
        <begin position="146"/>
        <end position="166"/>
    </location>
</feature>
<feature type="domain" description="Tyrosine-protein phosphatase" evidence="3">
    <location>
        <begin position="300"/>
        <end position="555"/>
    </location>
</feature>
<feature type="region of interest" description="Disordered" evidence="5">
    <location>
        <begin position="1"/>
        <end position="80"/>
    </location>
</feature>
<feature type="region of interest" description="Disordered" evidence="5">
    <location>
        <begin position="169"/>
        <end position="189"/>
    </location>
</feature>
<feature type="compositionally biased region" description="Basic and acidic residues" evidence="5">
    <location>
        <begin position="1"/>
        <end position="16"/>
    </location>
</feature>
<feature type="compositionally biased region" description="Pro residues" evidence="5">
    <location>
        <begin position="56"/>
        <end position="75"/>
    </location>
</feature>
<feature type="active site" description="Phosphocysteine intermediate" evidence="3 4">
    <location>
        <position position="496"/>
    </location>
</feature>
<feature type="binding site" evidence="1">
    <location>
        <position position="461"/>
    </location>
    <ligand>
        <name>substrate</name>
    </ligand>
</feature>
<feature type="binding site">
    <location>
        <begin position="496"/>
        <end position="502"/>
    </location>
    <ligand>
        <name>substrate</name>
    </ligand>
</feature>
<feature type="binding site" evidence="1">
    <location>
        <position position="540"/>
    </location>
    <ligand>
        <name>substrate</name>
    </ligand>
</feature>
<feature type="modified residue" description="Phosphoserine; by PKA" evidence="7">
    <location>
        <position position="245"/>
    </location>
</feature>
<feature type="modified residue" description="Phosphothreonine; by MAPK" evidence="7">
    <location>
        <position position="255"/>
    </location>
</feature>
<feature type="modified residue" description="Phosphoserine; by MAPK" evidence="7">
    <location>
        <position position="268"/>
    </location>
</feature>
<feature type="splice variant" id="VSP_054561" description="In isoform 3." evidence="9">
    <location>
        <begin position="1"/>
        <end position="24"/>
    </location>
</feature>
<feature type="splice variant" id="VSP_042654" description="In isoform 2." evidence="9">
    <location>
        <begin position="98"/>
        <end position="129"/>
    </location>
</feature>
<feature type="sequence variant" id="VAR_054369" description="In dbSNP:rs4757707." evidence="6 8">
    <original>P</original>
    <variation>A</variation>
    <location>
        <position position="170"/>
    </location>
</feature>
<feature type="sequence variant" id="VAR_054370" description="In dbSNP:rs11024773.">
    <original>H</original>
    <variation>R</variation>
    <location>
        <position position="561"/>
    </location>
</feature>
<feature type="sequence conflict" description="In Ref. 6; AAA87555." evidence="10" ref="6">
    <original>PGL</original>
    <variation>LGR</variation>
    <location>
        <begin position="32"/>
        <end position="34"/>
    </location>
</feature>
<feature type="sequence conflict" description="In Ref. 1; BAC03548." evidence="10" ref="1">
    <original>W</original>
    <variation>R</variation>
    <location>
        <position position="104"/>
    </location>
</feature>
<feature type="sequence conflict" description="In Ref. 2; CAD38632." evidence="10" ref="2">
    <original>G</original>
    <variation>A</variation>
    <location>
        <position position="107"/>
    </location>
</feature>
<feature type="sequence conflict" description="In Ref. 2; CAD38632." evidence="10" ref="2">
    <original>H</original>
    <variation>D</variation>
    <location>
        <position position="110"/>
    </location>
</feature>
<feature type="sequence conflict" description="In Ref. 6; AAA87555." evidence="10" ref="6">
    <original>I</original>
    <variation>M</variation>
    <location>
        <position position="111"/>
    </location>
</feature>
<feature type="sequence conflict" description="In Ref. 6; AAA87555." evidence="10" ref="6">
    <original>A</original>
    <variation>S</variation>
    <location>
        <position position="134"/>
    </location>
</feature>
<feature type="sequence conflict" description="In Ref. 6; AAA87555." evidence="10" ref="6">
    <original>S</original>
    <variation>G</variation>
    <location>
        <position position="145"/>
    </location>
</feature>
<feature type="sequence conflict" description="In Ref. 2; CAD38632." evidence="10" ref="2">
    <original>V</original>
    <variation>L</variation>
    <location>
        <position position="162"/>
    </location>
</feature>
<feature type="sequence conflict" description="In Ref. 6; AAA87555." evidence="10" ref="6">
    <original>D</original>
    <variation>V</variation>
    <location>
        <position position="313"/>
    </location>
</feature>
<feature type="sequence conflict" description="In Ref. 6; AAA87555." evidence="10" ref="6">
    <original>LV</original>
    <variation>RC</variation>
    <location>
        <begin position="322"/>
        <end position="323"/>
    </location>
</feature>
<feature type="sequence conflict" description="In Ref. 6; AAA87555." evidence="10" ref="6">
    <original>T</original>
    <variation>H</variation>
    <location>
        <position position="541"/>
    </location>
</feature>
<feature type="helix" evidence="11">
    <location>
        <begin position="287"/>
        <end position="294"/>
    </location>
</feature>
<feature type="helix" evidence="11">
    <location>
        <begin position="297"/>
        <end position="304"/>
    </location>
</feature>
<feature type="helix" evidence="11">
    <location>
        <begin position="314"/>
        <end position="316"/>
    </location>
</feature>
<feature type="helix" evidence="11">
    <location>
        <begin position="322"/>
        <end position="325"/>
    </location>
</feature>
<feature type="helix" evidence="11">
    <location>
        <begin position="335"/>
        <end position="337"/>
    </location>
</feature>
<feature type="strand" evidence="12">
    <location>
        <begin position="338"/>
        <end position="340"/>
    </location>
</feature>
<feature type="helix" evidence="11">
    <location>
        <begin position="349"/>
        <end position="352"/>
    </location>
</feature>
<feature type="strand" evidence="11">
    <location>
        <begin position="355"/>
        <end position="359"/>
    </location>
</feature>
<feature type="helix" evidence="11">
    <location>
        <begin position="362"/>
        <end position="364"/>
    </location>
</feature>
<feature type="strand" evidence="11">
    <location>
        <begin position="368"/>
        <end position="372"/>
    </location>
</feature>
<feature type="helix" evidence="11">
    <location>
        <begin position="377"/>
        <end position="379"/>
    </location>
</feature>
<feature type="helix" evidence="11">
    <location>
        <begin position="380"/>
        <end position="390"/>
    </location>
</feature>
<feature type="strand" evidence="11">
    <location>
        <begin position="394"/>
        <end position="398"/>
    </location>
</feature>
<feature type="turn" evidence="11">
    <location>
        <begin position="401"/>
        <end position="405"/>
    </location>
</feature>
<feature type="strand" evidence="11">
    <location>
        <begin position="406"/>
        <end position="408"/>
    </location>
</feature>
<feature type="strand" evidence="11">
    <location>
        <begin position="414"/>
        <end position="419"/>
    </location>
</feature>
<feature type="strand" evidence="11">
    <location>
        <begin position="422"/>
        <end position="431"/>
    </location>
</feature>
<feature type="strand" evidence="11">
    <location>
        <begin position="433"/>
        <end position="444"/>
    </location>
</feature>
<feature type="strand" evidence="11">
    <location>
        <begin position="447"/>
        <end position="456"/>
    </location>
</feature>
<feature type="helix" evidence="11">
    <location>
        <begin position="465"/>
        <end position="467"/>
    </location>
</feature>
<feature type="helix" evidence="11">
    <location>
        <begin position="468"/>
        <end position="483"/>
    </location>
</feature>
<feature type="strand" evidence="11">
    <location>
        <begin position="492"/>
        <end position="500"/>
    </location>
</feature>
<feature type="helix" evidence="11">
    <location>
        <begin position="501"/>
        <end position="519"/>
    </location>
</feature>
<feature type="helix" evidence="11">
    <location>
        <begin position="524"/>
        <end position="534"/>
    </location>
</feature>
<feature type="helix" evidence="11">
    <location>
        <begin position="542"/>
        <end position="559"/>
    </location>
</feature>
<comment type="function">
    <text evidence="7">May regulate the activity of several effector molecules involved in synaptic plasticity and neuronal cell survival, including MAPKs, Src family kinases and NMDA receptors.</text>
</comment>
<comment type="catalytic activity">
    <reaction evidence="4">
        <text>O-phospho-L-tyrosyl-[protein] + H2O = L-tyrosyl-[protein] + phosphate</text>
        <dbReference type="Rhea" id="RHEA:10684"/>
        <dbReference type="Rhea" id="RHEA-COMP:10136"/>
        <dbReference type="Rhea" id="RHEA-COMP:20101"/>
        <dbReference type="ChEBI" id="CHEBI:15377"/>
        <dbReference type="ChEBI" id="CHEBI:43474"/>
        <dbReference type="ChEBI" id="CHEBI:46858"/>
        <dbReference type="ChEBI" id="CHEBI:61978"/>
        <dbReference type="EC" id="3.1.3.48"/>
    </reaction>
</comment>
<comment type="interaction">
    <interactant intactId="EBI-1220572">
        <id>P54829</id>
    </interactant>
    <interactant intactId="EBI-2114729">
        <id>Q6UXB4</id>
        <label>CLEC4G</label>
    </interactant>
    <organismsDiffer>false</organismsDiffer>
    <experiments>3</experiments>
</comment>
<comment type="interaction">
    <interactant intactId="EBI-1220572">
        <id>P54829</id>
    </interactant>
    <interactant intactId="EBI-3911467">
        <id>Q07325</id>
        <label>CXCL9</label>
    </interactant>
    <organismsDiffer>false</organismsDiffer>
    <experiments>3</experiments>
</comment>
<comment type="interaction">
    <interactant intactId="EBI-1220572">
        <id>P54829</id>
    </interactant>
    <interactant intactId="EBI-717654">
        <id>O14569</id>
        <label>CYB561D2</label>
    </interactant>
    <organismsDiffer>false</organismsDiffer>
    <experiments>3</experiments>
</comment>
<comment type="interaction">
    <interactant intactId="EBI-1220572">
        <id>P54829</id>
    </interactant>
    <interactant intactId="EBI-12279764">
        <id>O75355-2</id>
        <label>ENTPD3</label>
    </interactant>
    <organismsDiffer>false</organismsDiffer>
    <experiments>3</experiments>
</comment>
<comment type="interaction">
    <interactant intactId="EBI-1220572">
        <id>P54829</id>
    </interactant>
    <interactant intactId="EBI-2341610">
        <id>Q9NX47</id>
        <label>MARCHF5</label>
    </interactant>
    <organismsDiffer>false</organismsDiffer>
    <experiments>3</experiments>
</comment>
<comment type="interaction">
    <interactant intactId="EBI-1220572">
        <id>P54829</id>
    </interactant>
    <interactant intactId="EBI-12147661">
        <id>P78383</id>
        <label>SLC35B1</label>
    </interactant>
    <organismsDiffer>false</organismsDiffer>
    <experiments>3</experiments>
</comment>
<comment type="interaction">
    <interactant intactId="EBI-1220572">
        <id>P54829</id>
    </interactant>
    <interactant intactId="EBI-710997">
        <id>P54274</id>
        <label>TERF1</label>
    </interactant>
    <organismsDiffer>false</organismsDiffer>
    <experiments>2</experiments>
</comment>
<comment type="interaction">
    <interactant intactId="EBI-1220572">
        <id>P54829</id>
    </interactant>
    <interactant intactId="EBI-11994282">
        <id>Q5SNT2-2</id>
        <label>TMEM201</label>
    </interactant>
    <organismsDiffer>false</organismsDiffer>
    <experiments>3</experiments>
</comment>
<comment type="interaction">
    <interactant intactId="EBI-1220572">
        <id>P54829</id>
    </interactant>
    <interactant intactId="EBI-10297449">
        <id>Q9BSA0</id>
        <label>TMEM51</label>
    </interactant>
    <organismsDiffer>false</organismsDiffer>
    <experiments>3</experiments>
</comment>
<comment type="interaction">
    <interactant intactId="EBI-1220572">
        <id>P54829</id>
    </interactant>
    <interactant intactId="EBI-726044">
        <id>Q9NW97</id>
        <label>TMEM51</label>
    </interactant>
    <organismsDiffer>false</organismsDiffer>
    <experiments>3</experiments>
</comment>
<comment type="interaction">
    <interactant intactId="EBI-1220572">
        <id>P54829</id>
    </interactant>
    <interactant intactId="EBI-723716">
        <id>Q9UEU0</id>
        <label>VTI1B</label>
    </interactant>
    <organismsDiffer>false</organismsDiffer>
    <experiments>4</experiments>
</comment>
<comment type="subcellular location">
    <subcellularLocation>
        <location evidence="1">Endoplasmic reticulum membrane</location>
        <topology evidence="1">Multi-pass membrane protein</topology>
    </subcellularLocation>
</comment>
<comment type="alternative products">
    <event type="alternative splicing"/>
    <isoform>
        <id>P54829-1</id>
        <name>1</name>
        <name>STEP61</name>
        <sequence type="displayed"/>
    </isoform>
    <isoform>
        <id>P54829-2</id>
        <name>2</name>
        <sequence type="described" ref="VSP_042654"/>
    </isoform>
    <isoform>
        <id>P54829-3</id>
        <name>3</name>
        <sequence type="described" ref="VSP_054561"/>
    </isoform>
</comment>
<comment type="PTM">
    <text evidence="7">Phosphorylation at Ser-245 by PKA deactivates PTPN5. Phosphorylation at Thr-255 and Ser-268 by MAPKs stabilizes the phosphatase, dephosphorylation of these sites results in ubiquitin-mediated degradation of the active phosphatase.</text>
</comment>
<comment type="similarity">
    <text evidence="10">Belongs to the protein-tyrosine phosphatase family. Non-receptor class subfamily.</text>
</comment>
<comment type="caution">
    <text evidence="10">It is uncertain whether Met-1 or Met-25 is the initiator.</text>
</comment>
<accession>P54829</accession>
<accession>B3KXG7</accession>
<accession>B7Z386</accession>
<accession>B7ZAF5</accession>
<accession>D3DQY7</accession>
<accession>Q6P1Z2</accession>
<accession>Q8N2A1</accession>
<accession>Q8NDP8</accession>
<evidence type="ECO:0000250" key="1"/>
<evidence type="ECO:0000255" key="2"/>
<evidence type="ECO:0000255" key="3">
    <source>
        <dbReference type="PROSITE-ProRule" id="PRU00160"/>
    </source>
</evidence>
<evidence type="ECO:0000255" key="4">
    <source>
        <dbReference type="PROSITE-ProRule" id="PRU10044"/>
    </source>
</evidence>
<evidence type="ECO:0000256" key="5">
    <source>
        <dbReference type="SAM" id="MobiDB-lite"/>
    </source>
</evidence>
<evidence type="ECO:0000269" key="6">
    <source>
    </source>
</evidence>
<evidence type="ECO:0000269" key="7">
    <source>
    </source>
</evidence>
<evidence type="ECO:0000269" key="8">
    <source ref="4"/>
</evidence>
<evidence type="ECO:0000303" key="9">
    <source>
    </source>
</evidence>
<evidence type="ECO:0000305" key="10"/>
<evidence type="ECO:0007829" key="11">
    <source>
        <dbReference type="PDB" id="6H8R"/>
    </source>
</evidence>
<evidence type="ECO:0007829" key="12">
    <source>
        <dbReference type="PDB" id="8SLS"/>
    </source>
</evidence>
<sequence>MNYEGARSERENHAADDSEGGALDMCCSERLPGLPQPIVMEALDEAEGLQDSQREMPPPPPPSPPSDPAQKPPPRGAGSHSLTVRSSLCLFAASQFLLACGVLWFSGYGHIWSQNATNLVSSLLTLLKQLEPTAWLDSGTWGVPSLLLVFLSVGLVLVTTLVWHLLRTPPEPPTPLPPEDRRQSVSRQPSFTYSEWMEEKIEDDFLDLDPVPETPVFDCVMDIKPEADPTSLTVKSMGLQERRGSNVSLTLDMCTPGCNEEGFGYLMSPREESAREYLLSASRVLQAEELHEKALDPFLLQAEFFEIPMNFVDPKEYDIPGLVRKNRYKTILPNPHSRVCLTSPDPDDPLSSYINANYIRGYGGEEKVYIATQGPIVSTVADFWRMVWQEHTPIIVMITNIEEMNEKCTEYWPEEQVAYDGVEITVQKVIHTEDYRLRLISLKSGTEERGLKHYWFTSWPDQKTPDRAPPLLHLVREVEEAAQQEGPHCAPIIVHCSAGIGRTGCFIATSICCQQLRQEGVVDILKTTCQLRQDRGGMIQTCEQYQFVHHVMSLYEKQLSHQSPE</sequence>
<name>PTN5_HUMAN</name>
<keyword id="KW-0002">3D-structure</keyword>
<keyword id="KW-0025">Alternative splicing</keyword>
<keyword id="KW-0256">Endoplasmic reticulum</keyword>
<keyword id="KW-0378">Hydrolase</keyword>
<keyword id="KW-0472">Membrane</keyword>
<keyword id="KW-0597">Phosphoprotein</keyword>
<keyword id="KW-0904">Protein phosphatase</keyword>
<keyword id="KW-1267">Proteomics identification</keyword>
<keyword id="KW-1185">Reference proteome</keyword>
<keyword id="KW-0812">Transmembrane</keyword>
<keyword id="KW-1133">Transmembrane helix</keyword>